<reference key="1">
    <citation type="journal article" date="1994" name="Plant J.">
        <title>The Arabidopsis ribonuclease gene RNS1 is tightly controlled in response to phosphate limitation.</title>
        <authorList>
            <person name="Bariola P.A."/>
            <person name="Howard C.J."/>
            <person name="Taylor C.B."/>
            <person name="Verburg M.T."/>
            <person name="Jaglan V.D."/>
            <person name="Green P.J."/>
        </authorList>
    </citation>
    <scope>NUCLEOTIDE SEQUENCE [MRNA]</scope>
    <source>
        <strain>cv. Columbia</strain>
    </source>
</reference>
<reference key="2">
    <citation type="journal article" date="1999" name="Nature">
        <title>Sequence and analysis of chromosome 2 of the plant Arabidopsis thaliana.</title>
        <authorList>
            <person name="Lin X."/>
            <person name="Kaul S."/>
            <person name="Rounsley S.D."/>
            <person name="Shea T.P."/>
            <person name="Benito M.-I."/>
            <person name="Town C.D."/>
            <person name="Fujii C.Y."/>
            <person name="Mason T.M."/>
            <person name="Bowman C.L."/>
            <person name="Barnstead M.E."/>
            <person name="Feldblyum T.V."/>
            <person name="Buell C.R."/>
            <person name="Ketchum K.A."/>
            <person name="Lee J.J."/>
            <person name="Ronning C.M."/>
            <person name="Koo H.L."/>
            <person name="Moffat K.S."/>
            <person name="Cronin L.A."/>
            <person name="Shen M."/>
            <person name="Pai G."/>
            <person name="Van Aken S."/>
            <person name="Umayam L."/>
            <person name="Tallon L.J."/>
            <person name="Gill J.E."/>
            <person name="Adams M.D."/>
            <person name="Carrera A.J."/>
            <person name="Creasy T.H."/>
            <person name="Goodman H.M."/>
            <person name="Somerville C.R."/>
            <person name="Copenhaver G.P."/>
            <person name="Preuss D."/>
            <person name="Nierman W.C."/>
            <person name="White O."/>
            <person name="Eisen J.A."/>
            <person name="Salzberg S.L."/>
            <person name="Fraser C.M."/>
            <person name="Venter J.C."/>
        </authorList>
    </citation>
    <scope>NUCLEOTIDE SEQUENCE [LARGE SCALE GENOMIC DNA]</scope>
    <source>
        <strain>cv. Columbia</strain>
    </source>
</reference>
<reference key="3">
    <citation type="journal article" date="2017" name="Plant J.">
        <title>Araport11: a complete reannotation of the Arabidopsis thaliana reference genome.</title>
        <authorList>
            <person name="Cheng C.Y."/>
            <person name="Krishnakumar V."/>
            <person name="Chan A.P."/>
            <person name="Thibaud-Nissen F."/>
            <person name="Schobel S."/>
            <person name="Town C.D."/>
        </authorList>
    </citation>
    <scope>GENOME REANNOTATION</scope>
    <source>
        <strain>cv. Columbia</strain>
    </source>
</reference>
<reference key="4">
    <citation type="journal article" date="2003" name="Science">
        <title>Empirical analysis of transcriptional activity in the Arabidopsis genome.</title>
        <authorList>
            <person name="Yamada K."/>
            <person name="Lim J."/>
            <person name="Dale J.M."/>
            <person name="Chen H."/>
            <person name="Shinn P."/>
            <person name="Palm C.J."/>
            <person name="Southwick A.M."/>
            <person name="Wu H.C."/>
            <person name="Kim C.J."/>
            <person name="Nguyen M."/>
            <person name="Pham P.K."/>
            <person name="Cheuk R.F."/>
            <person name="Karlin-Newmann G."/>
            <person name="Liu S.X."/>
            <person name="Lam B."/>
            <person name="Sakano H."/>
            <person name="Wu T."/>
            <person name="Yu G."/>
            <person name="Miranda M."/>
            <person name="Quach H.L."/>
            <person name="Tripp M."/>
            <person name="Chang C.H."/>
            <person name="Lee J.M."/>
            <person name="Toriumi M.J."/>
            <person name="Chan M.M."/>
            <person name="Tang C.C."/>
            <person name="Onodera C.S."/>
            <person name="Deng J.M."/>
            <person name="Akiyama K."/>
            <person name="Ansari Y."/>
            <person name="Arakawa T."/>
            <person name="Banh J."/>
            <person name="Banno F."/>
            <person name="Bowser L."/>
            <person name="Brooks S.Y."/>
            <person name="Carninci P."/>
            <person name="Chao Q."/>
            <person name="Choy N."/>
            <person name="Enju A."/>
            <person name="Goldsmith A.D."/>
            <person name="Gurjal M."/>
            <person name="Hansen N.F."/>
            <person name="Hayashizaki Y."/>
            <person name="Johnson-Hopson C."/>
            <person name="Hsuan V.W."/>
            <person name="Iida K."/>
            <person name="Karnes M."/>
            <person name="Khan S."/>
            <person name="Koesema E."/>
            <person name="Ishida J."/>
            <person name="Jiang P.X."/>
            <person name="Jones T."/>
            <person name="Kawai J."/>
            <person name="Kamiya A."/>
            <person name="Meyers C."/>
            <person name="Nakajima M."/>
            <person name="Narusaka M."/>
            <person name="Seki M."/>
            <person name="Sakurai T."/>
            <person name="Satou M."/>
            <person name="Tamse R."/>
            <person name="Vaysberg M."/>
            <person name="Wallender E.K."/>
            <person name="Wong C."/>
            <person name="Yamamura Y."/>
            <person name="Yuan S."/>
            <person name="Shinozaki K."/>
            <person name="Davis R.W."/>
            <person name="Theologis A."/>
            <person name="Ecker J.R."/>
        </authorList>
    </citation>
    <scope>NUCLEOTIDE SEQUENCE [LARGE SCALE MRNA]</scope>
    <source>
        <strain>cv. Columbia</strain>
    </source>
</reference>
<reference key="5">
    <citation type="journal article" date="2006" name="Plant Biotechnol. J.">
        <title>Simultaneous high-throughput recombinational cloning of open reading frames in closed and open configurations.</title>
        <authorList>
            <person name="Underwood B.A."/>
            <person name="Vanderhaeghen R."/>
            <person name="Whitford R."/>
            <person name="Town C.D."/>
            <person name="Hilson P."/>
        </authorList>
    </citation>
    <scope>NUCLEOTIDE SEQUENCE [LARGE SCALE MRNA]</scope>
    <source>
        <strain>cv. Columbia</strain>
    </source>
</reference>
<reference key="6">
    <citation type="submission" date="2002-03" db="EMBL/GenBank/DDBJ databases">
        <title>Full-length cDNA from Arabidopsis thaliana.</title>
        <authorList>
            <person name="Brover V.V."/>
            <person name="Troukhan M.E."/>
            <person name="Alexandrov N.A."/>
            <person name="Lu Y.-P."/>
            <person name="Flavell R.B."/>
            <person name="Feldmann K.A."/>
        </authorList>
    </citation>
    <scope>NUCLEOTIDE SEQUENCE [LARGE SCALE MRNA]</scope>
</reference>
<reference key="7">
    <citation type="submission" date="1993-11" db="EMBL/GenBank/DDBJ databases">
        <title>The Arabidopsis thaliana transcribed genome: the GDR cDNA program.</title>
        <authorList>
            <person name="Raynal M."/>
            <person name="Grellet F."/>
            <person name="Laudie M."/>
            <person name="Meyer Y."/>
            <person name="Cooke R."/>
            <person name="Delseny M."/>
        </authorList>
    </citation>
    <scope>NUCLEOTIDE SEQUENCE [MRNA] OF 2-225</scope>
    <source>
        <strain>cv. Columbia</strain>
        <tissue>Green siliques</tissue>
    </source>
</reference>
<reference key="8">
    <citation type="journal article" date="1997" name="J. Biol. Chem.">
        <title>Differential extraction and protein sequencing reveals major differences in patterns of primary cell wall proteins from plants.</title>
        <authorList>
            <person name="Robertson D."/>
            <person name="Mitchell G.P."/>
            <person name="Gilroy J.S."/>
            <person name="Gerrish C."/>
            <person name="Bolwell G.P."/>
            <person name="Slabas A.R."/>
        </authorList>
    </citation>
    <scope>PROTEIN SEQUENCE OF 23-41</scope>
    <source>
        <strain>cv. Landsberg erecta</strain>
    </source>
</reference>
<protein>
    <recommendedName>
        <fullName>Ribonuclease 1</fullName>
        <ecNumber evidence="5">4.6.1.19</ecNumber>
    </recommendedName>
</protein>
<comment type="function">
    <text>May remobilize phosphate, particularly when cells senesce or when phosphate becomes limiting.</text>
</comment>
<comment type="catalytic activity">
    <reaction evidence="4 5">
        <text>a ribonucleotidyl-ribonucleotide-RNA + H2O = a 3'-end 3'-phospho-ribonucleotide-RNA + a 5'-end dephospho-ribonucleoside-RNA + H(+)</text>
        <dbReference type="Rhea" id="RHEA:68052"/>
        <dbReference type="Rhea" id="RHEA-COMP:10463"/>
        <dbReference type="Rhea" id="RHEA-COMP:13936"/>
        <dbReference type="Rhea" id="RHEA-COMP:17355"/>
        <dbReference type="ChEBI" id="CHEBI:15377"/>
        <dbReference type="ChEBI" id="CHEBI:15378"/>
        <dbReference type="ChEBI" id="CHEBI:83062"/>
        <dbReference type="ChEBI" id="CHEBI:138284"/>
        <dbReference type="ChEBI" id="CHEBI:173118"/>
        <dbReference type="EC" id="4.6.1.19"/>
    </reaction>
</comment>
<comment type="induction">
    <text>By phosphate starvation.</text>
</comment>
<comment type="similarity">
    <text evidence="7">Belongs to the RNase T2 family.</text>
</comment>
<comment type="sequence caution" evidence="7">
    <conflict type="erroneous termination">
        <sequence resource="EMBL-CDS" id="ABK28493"/>
    </conflict>
    <text>Extended C-terminus.</text>
</comment>
<dbReference type="EC" id="4.6.1.19" evidence="5"/>
<dbReference type="EMBL" id="U05206">
    <property type="protein sequence ID" value="AAC48925.1"/>
    <property type="molecule type" value="mRNA"/>
</dbReference>
<dbReference type="EMBL" id="AC004138">
    <property type="protein sequence ID" value="AAC32917.1"/>
    <property type="molecule type" value="Genomic_DNA"/>
</dbReference>
<dbReference type="EMBL" id="CP002685">
    <property type="protein sequence ID" value="AEC05652.1"/>
    <property type="molecule type" value="Genomic_DNA"/>
</dbReference>
<dbReference type="EMBL" id="AY072413">
    <property type="protein sequence ID" value="AAL62405.1"/>
    <property type="molecule type" value="mRNA"/>
</dbReference>
<dbReference type="EMBL" id="AY114710">
    <property type="protein sequence ID" value="AAM48029.1"/>
    <property type="molecule type" value="mRNA"/>
</dbReference>
<dbReference type="EMBL" id="DQ446504">
    <property type="protein sequence ID" value="ABE65814.1"/>
    <property type="molecule type" value="mRNA"/>
</dbReference>
<dbReference type="EMBL" id="DQ652992">
    <property type="protein sequence ID" value="ABK28493.1"/>
    <property type="status" value="ALT_SEQ"/>
    <property type="molecule type" value="mRNA"/>
</dbReference>
<dbReference type="EMBL" id="AY086747">
    <property type="protein sequence ID" value="AAM63798.1"/>
    <property type="molecule type" value="mRNA"/>
</dbReference>
<dbReference type="EMBL" id="Z27289">
    <property type="protein sequence ID" value="CAA81782.1"/>
    <property type="molecule type" value="mRNA"/>
</dbReference>
<dbReference type="EMBL" id="Z27290">
    <property type="protein sequence ID" value="CAA81783.1"/>
    <property type="molecule type" value="mRNA"/>
</dbReference>
<dbReference type="PIR" id="A84443">
    <property type="entry name" value="A84443"/>
</dbReference>
<dbReference type="RefSeq" id="NP_178399.1">
    <property type="nucleotide sequence ID" value="NM_126351.3"/>
</dbReference>
<dbReference type="SMR" id="P42813"/>
<dbReference type="BioGRID" id="230">
    <property type="interactions" value="6"/>
</dbReference>
<dbReference type="FunCoup" id="P42813">
    <property type="interactions" value="1116"/>
</dbReference>
<dbReference type="IntAct" id="P42813">
    <property type="interactions" value="6"/>
</dbReference>
<dbReference type="STRING" id="3702.P42813"/>
<dbReference type="PaxDb" id="3702-AT2G02990.1"/>
<dbReference type="ProteomicsDB" id="227967"/>
<dbReference type="EnsemblPlants" id="AT2G02990.1">
    <property type="protein sequence ID" value="AT2G02990.1"/>
    <property type="gene ID" value="AT2G02990"/>
</dbReference>
<dbReference type="GeneID" id="814828"/>
<dbReference type="Gramene" id="AT2G02990.1">
    <property type="protein sequence ID" value="AT2G02990.1"/>
    <property type="gene ID" value="AT2G02990"/>
</dbReference>
<dbReference type="KEGG" id="ath:AT2G02990"/>
<dbReference type="Araport" id="AT2G02990"/>
<dbReference type="TAIR" id="AT2G02990">
    <property type="gene designation" value="RNS1"/>
</dbReference>
<dbReference type="eggNOG" id="KOG1642">
    <property type="taxonomic scope" value="Eukaryota"/>
</dbReference>
<dbReference type="HOGENOM" id="CLU_069912_2_1_1"/>
<dbReference type="InParanoid" id="P42813"/>
<dbReference type="OMA" id="TNCHIGS"/>
<dbReference type="PhylomeDB" id="P42813"/>
<dbReference type="PRO" id="PR:P42813"/>
<dbReference type="Proteomes" id="UP000006548">
    <property type="component" value="Chromosome 2"/>
</dbReference>
<dbReference type="ExpressionAtlas" id="P42813">
    <property type="expression patterns" value="baseline and differential"/>
</dbReference>
<dbReference type="GO" id="GO:0005576">
    <property type="term" value="C:extracellular region"/>
    <property type="evidence" value="ECO:0000314"/>
    <property type="project" value="TAIR"/>
</dbReference>
<dbReference type="GO" id="GO:0033897">
    <property type="term" value="F:ribonuclease T2 activity"/>
    <property type="evidence" value="ECO:0007669"/>
    <property type="project" value="UniProtKB-EC"/>
</dbReference>
<dbReference type="GO" id="GO:0003723">
    <property type="term" value="F:RNA binding"/>
    <property type="evidence" value="ECO:0007669"/>
    <property type="project" value="InterPro"/>
</dbReference>
<dbReference type="GO" id="GO:0004540">
    <property type="term" value="F:RNA nuclease activity"/>
    <property type="evidence" value="ECO:0000314"/>
    <property type="project" value="TAIR"/>
</dbReference>
<dbReference type="GO" id="GO:0009718">
    <property type="term" value="P:anthocyanin-containing compound biosynthetic process"/>
    <property type="evidence" value="ECO:0000315"/>
    <property type="project" value="TAIR"/>
</dbReference>
<dbReference type="GO" id="GO:0016036">
    <property type="term" value="P:cellular response to phosphate starvation"/>
    <property type="evidence" value="ECO:0000270"/>
    <property type="project" value="TAIR"/>
</dbReference>
<dbReference type="GO" id="GO:0009611">
    <property type="term" value="P:response to wounding"/>
    <property type="evidence" value="ECO:0000270"/>
    <property type="project" value="TAIR"/>
</dbReference>
<dbReference type="CDD" id="cd01061">
    <property type="entry name" value="RNase_T2_euk"/>
    <property type="match status" value="1"/>
</dbReference>
<dbReference type="FunFam" id="3.90.730.10:FF:000003">
    <property type="entry name" value="Ribonuclease 3"/>
    <property type="match status" value="1"/>
</dbReference>
<dbReference type="Gene3D" id="3.90.730.10">
    <property type="entry name" value="Ribonuclease T2-like"/>
    <property type="match status" value="1"/>
</dbReference>
<dbReference type="InterPro" id="IPR033697">
    <property type="entry name" value="Ribonuclease_T2_eukaryotic"/>
</dbReference>
<dbReference type="InterPro" id="IPR001568">
    <property type="entry name" value="RNase_T2-like"/>
</dbReference>
<dbReference type="InterPro" id="IPR036430">
    <property type="entry name" value="RNase_T2-like_sf"/>
</dbReference>
<dbReference type="InterPro" id="IPR018188">
    <property type="entry name" value="RNase_T2_His_AS_1"/>
</dbReference>
<dbReference type="InterPro" id="IPR033130">
    <property type="entry name" value="RNase_T2_His_AS_2"/>
</dbReference>
<dbReference type="PANTHER" id="PTHR11240:SF72">
    <property type="entry name" value="RIBONUCLEASE 1"/>
    <property type="match status" value="1"/>
</dbReference>
<dbReference type="PANTHER" id="PTHR11240">
    <property type="entry name" value="RIBONUCLEASE T2"/>
    <property type="match status" value="1"/>
</dbReference>
<dbReference type="Pfam" id="PF00445">
    <property type="entry name" value="Ribonuclease_T2"/>
    <property type="match status" value="1"/>
</dbReference>
<dbReference type="SUPFAM" id="SSF55895">
    <property type="entry name" value="Ribonuclease Rh-like"/>
    <property type="match status" value="1"/>
</dbReference>
<dbReference type="PROSITE" id="PS00530">
    <property type="entry name" value="RNASE_T2_1"/>
    <property type="match status" value="1"/>
</dbReference>
<dbReference type="PROSITE" id="PS00531">
    <property type="entry name" value="RNASE_T2_2"/>
    <property type="match status" value="1"/>
</dbReference>
<evidence type="ECO:0000250" key="1">
    <source>
        <dbReference type="UniProtKB" id="P08056"/>
    </source>
</evidence>
<evidence type="ECO:0000250" key="2">
    <source>
        <dbReference type="UniProtKB" id="P23540"/>
    </source>
</evidence>
<evidence type="ECO:0000250" key="3">
    <source>
        <dbReference type="UniProtKB" id="Q7SID5"/>
    </source>
</evidence>
<evidence type="ECO:0000255" key="4">
    <source>
        <dbReference type="PROSITE-ProRule" id="PRU10045"/>
    </source>
</evidence>
<evidence type="ECO:0000255" key="5">
    <source>
        <dbReference type="PROSITE-ProRule" id="PRU10046"/>
    </source>
</evidence>
<evidence type="ECO:0000269" key="6">
    <source>
    </source>
</evidence>
<evidence type="ECO:0000305" key="7"/>
<name>RNS1_ARATH</name>
<proteinExistence type="evidence at protein level"/>
<feature type="signal peptide" evidence="6">
    <location>
        <begin position="1"/>
        <end position="22"/>
    </location>
</feature>
<feature type="chain" id="PRO_0000030966" description="Ribonuclease 1">
    <location>
        <begin position="23"/>
        <end position="230"/>
    </location>
</feature>
<feature type="active site" description="Proton donor" evidence="3 4">
    <location>
        <position position="65"/>
    </location>
</feature>
<feature type="active site" evidence="1">
    <location>
        <position position="119"/>
    </location>
</feature>
<feature type="active site" description="Proton acceptor" evidence="3 4">
    <location>
        <position position="123"/>
    </location>
</feature>
<feature type="binding site" evidence="2">
    <location>
        <position position="38"/>
    </location>
    <ligand>
        <name>RNA</name>
        <dbReference type="ChEBI" id="CHEBI:33697"/>
    </ligand>
    <ligandPart>
        <name>a 3'-terminal ribonucleotide 3'-phosphate residue</name>
        <dbReference type="ChEBI" id="CHEBI:83062"/>
    </ligandPart>
</feature>
<feature type="binding site" evidence="2">
    <location>
        <position position="65"/>
    </location>
    <ligand>
        <name>RNA</name>
        <dbReference type="ChEBI" id="CHEBI:33697"/>
    </ligand>
    <ligandPart>
        <name>a 3'-terminal ribonucleotide 3'-phosphate residue</name>
        <dbReference type="ChEBI" id="CHEBI:83062"/>
    </ligandPart>
</feature>
<feature type="binding site" evidence="2">
    <location>
        <position position="115"/>
    </location>
    <ligand>
        <name>RNA</name>
        <dbReference type="ChEBI" id="CHEBI:33697"/>
    </ligand>
    <ligandPart>
        <name>a 3'-terminal ribonucleotide 3'-phosphate residue</name>
        <dbReference type="ChEBI" id="CHEBI:83062"/>
    </ligandPart>
</feature>
<feature type="binding site" evidence="2">
    <location>
        <begin position="118"/>
        <end position="119"/>
    </location>
    <ligand>
        <name>RNA</name>
        <dbReference type="ChEBI" id="CHEBI:33697"/>
    </ligand>
    <ligandPart>
        <name>a 3'-terminal ribonucleotide 3'-phosphate residue</name>
        <dbReference type="ChEBI" id="CHEBI:83062"/>
    </ligandPart>
</feature>
<feature type="binding site" evidence="2">
    <location>
        <begin position="122"/>
        <end position="123"/>
    </location>
    <ligand>
        <name>RNA</name>
        <dbReference type="ChEBI" id="CHEBI:33697"/>
    </ligand>
    <ligandPart>
        <name>a 3'-terminal ribonucleotide 3'-phosphate residue</name>
        <dbReference type="ChEBI" id="CHEBI:83062"/>
    </ligandPart>
</feature>
<feature type="disulfide bond" evidence="3">
    <location>
        <begin position="44"/>
        <end position="50"/>
    </location>
</feature>
<feature type="disulfide bond" evidence="1">
    <location>
        <begin position="80"/>
        <end position="126"/>
    </location>
</feature>
<feature type="disulfide bond" evidence="1">
    <location>
        <begin position="186"/>
        <end position="221"/>
    </location>
</feature>
<feature type="disulfide bond" evidence="2">
    <location>
        <begin position="202"/>
        <end position="213"/>
    </location>
</feature>
<feature type="sequence conflict" description="In Ref. 8; AA sequence." evidence="7" ref="8">
    <original>WPG</original>
    <variation>GXP</variation>
    <location>
        <begin position="39"/>
        <end position="41"/>
    </location>
</feature>
<feature type="sequence conflict" description="In Ref. 6; AAM63798." evidence="7" ref="6">
    <original>A</original>
    <variation>D</variation>
    <location>
        <position position="82"/>
    </location>
</feature>
<feature type="sequence conflict" description="In Ref. 7; CAA81782." evidence="7" ref="7">
    <original>VI</original>
    <variation>GY</variation>
    <location>
        <begin position="130"/>
        <end position="131"/>
    </location>
</feature>
<feature type="sequence conflict" description="In Ref. 7; CAA81782." evidence="7" ref="7">
    <original>V</original>
    <variation>A</variation>
    <location>
        <position position="203"/>
    </location>
</feature>
<gene>
    <name type="primary">RNS1</name>
    <name type="ordered locus">At2g02990</name>
    <name type="ORF">T17M13.16</name>
</gene>
<keyword id="KW-0903">Direct protein sequencing</keyword>
<keyword id="KW-1015">Disulfide bond</keyword>
<keyword id="KW-0255">Endonuclease</keyword>
<keyword id="KW-0378">Hydrolase</keyword>
<keyword id="KW-0456">Lyase</keyword>
<keyword id="KW-0540">Nuclease</keyword>
<keyword id="KW-1185">Reference proteome</keyword>
<keyword id="KW-0732">Signal</keyword>
<keyword id="KW-0346">Stress response</keyword>
<sequence length="230" mass="25397">MKILLASLCLISLLVILPSVFSASSSSEDFDFFYFVQQWPGSYCDTQKKCCYPNSGKPAADFGIHGLWPNYKDGTYPSNCDASKPFDSSTISDLLTSMKKSWPTLACPSGSGEAFWEHEWEKHGTCSESVIDQHEYFQTALNLKQKTNLLGALTKAGINPDGKSYSLESIRDSIKESIGFTPWVECNRDGSGNSQLYQVYLCVDRSGSGLIECPVFPHGKCGAEIEFPSF</sequence>
<accession>P42813</accession>
<accession>A0MEM0</accession>
<accession>Q1PF62</accession>
<accession>Q42188</accession>
<accession>Q6LAC8</accession>
<accession>Q8LC78</accession>
<organism>
    <name type="scientific">Arabidopsis thaliana</name>
    <name type="common">Mouse-ear cress</name>
    <dbReference type="NCBI Taxonomy" id="3702"/>
    <lineage>
        <taxon>Eukaryota</taxon>
        <taxon>Viridiplantae</taxon>
        <taxon>Streptophyta</taxon>
        <taxon>Embryophyta</taxon>
        <taxon>Tracheophyta</taxon>
        <taxon>Spermatophyta</taxon>
        <taxon>Magnoliopsida</taxon>
        <taxon>eudicotyledons</taxon>
        <taxon>Gunneridae</taxon>
        <taxon>Pentapetalae</taxon>
        <taxon>rosids</taxon>
        <taxon>malvids</taxon>
        <taxon>Brassicales</taxon>
        <taxon>Brassicaceae</taxon>
        <taxon>Camelineae</taxon>
        <taxon>Arabidopsis</taxon>
    </lineage>
</organism>